<feature type="chain" id="PRO_0000141364" description="Aspartate-semialdehyde dehydrogenase">
    <location>
        <begin position="1"/>
        <end position="371"/>
    </location>
</feature>
<feature type="active site" description="Acyl-thioester intermediate" evidence="1">
    <location>
        <position position="137"/>
    </location>
</feature>
<feature type="active site" description="Proton acceptor" evidence="1">
    <location>
        <position position="276"/>
    </location>
</feature>
<feature type="binding site" evidence="1">
    <location>
        <begin position="11"/>
        <end position="14"/>
    </location>
    <ligand>
        <name>NADP(+)</name>
        <dbReference type="ChEBI" id="CHEBI:58349"/>
    </ligand>
</feature>
<feature type="binding site" evidence="1">
    <location>
        <begin position="38"/>
        <end position="39"/>
    </location>
    <ligand>
        <name>NADP(+)</name>
        <dbReference type="ChEBI" id="CHEBI:58349"/>
    </ligand>
</feature>
<feature type="binding site" evidence="1">
    <location>
        <position position="75"/>
    </location>
    <ligand>
        <name>NADP(+)</name>
        <dbReference type="ChEBI" id="CHEBI:58349"/>
    </ligand>
</feature>
<feature type="binding site" evidence="1">
    <location>
        <position position="104"/>
    </location>
    <ligand>
        <name>phosphate</name>
        <dbReference type="ChEBI" id="CHEBI:43474"/>
    </ligand>
</feature>
<feature type="binding site" evidence="1">
    <location>
        <position position="164"/>
    </location>
    <ligand>
        <name>substrate</name>
    </ligand>
</feature>
<feature type="binding site" evidence="1">
    <location>
        <begin position="167"/>
        <end position="168"/>
    </location>
    <ligand>
        <name>NADP(+)</name>
        <dbReference type="ChEBI" id="CHEBI:58349"/>
    </ligand>
</feature>
<feature type="binding site" evidence="1">
    <location>
        <position position="243"/>
    </location>
    <ligand>
        <name>substrate</name>
    </ligand>
</feature>
<feature type="binding site" evidence="1">
    <location>
        <position position="246"/>
    </location>
    <ligand>
        <name>phosphate</name>
        <dbReference type="ChEBI" id="CHEBI:43474"/>
    </ligand>
</feature>
<feature type="binding site" evidence="1">
    <location>
        <position position="269"/>
    </location>
    <ligand>
        <name>substrate</name>
    </ligand>
</feature>
<feature type="binding site" evidence="1">
    <location>
        <position position="352"/>
    </location>
    <ligand>
        <name>NADP(+)</name>
        <dbReference type="ChEBI" id="CHEBI:58349"/>
    </ligand>
</feature>
<reference key="1">
    <citation type="journal article" date="2002" name="Science">
        <title>50 million years of genomic stasis in endosymbiotic bacteria.</title>
        <authorList>
            <person name="Tamas I."/>
            <person name="Klasson L."/>
            <person name="Canbaeck B."/>
            <person name="Naeslund A.K."/>
            <person name="Eriksson A.-S."/>
            <person name="Wernegreen J.J."/>
            <person name="Sandstroem J.P."/>
            <person name="Moran N.A."/>
            <person name="Andersson S.G.E."/>
        </authorList>
    </citation>
    <scope>NUCLEOTIDE SEQUENCE [LARGE SCALE GENOMIC DNA]</scope>
    <source>
        <strain>Sg</strain>
    </source>
</reference>
<sequence>MTKSVGIIGWRGMVGSVLLKRMQEENDFSKIIPYFFSTSQSGQDGPIINNILSKNLKDAYNINLLQEMDIIITCQGSSYTEKIYPKLRNNNWQGYWIDAASTLRMEKDATIILDPVNLNVINNALDKGIKTFVGGNCTVSLMLMALGGLFVNNLIDWVFVSTYQAASGAGSRYVIELLKQMGSLYNVVSKDLLDKSYSVLDIEKKVTQESRSKNFPLENFSVPLATSLIPWIDVEMKNGQSREEWKGQAETNKILNLKKKVLIDGTCVRISSIRCHSQSFLIKLNKDISLENIKKIIVNHNQWVDVIPNNMQKTLCNLTPSAVTDTLNIPIGRLRKLNIDDRYLSAFTVGDQLLWGAAEPLRRMLNLLVNI</sequence>
<evidence type="ECO:0000255" key="1">
    <source>
        <dbReference type="HAMAP-Rule" id="MF_02121"/>
    </source>
</evidence>
<dbReference type="EC" id="1.2.1.11" evidence="1"/>
<dbReference type="EMBL" id="AE013218">
    <property type="protein sequence ID" value="AAM67976.1"/>
    <property type="molecule type" value="Genomic_DNA"/>
</dbReference>
<dbReference type="RefSeq" id="WP_011053943.1">
    <property type="nucleotide sequence ID" value="NC_004061.1"/>
</dbReference>
<dbReference type="SMR" id="Q8K9B5"/>
<dbReference type="STRING" id="198804.BUsg_433"/>
<dbReference type="GeneID" id="93003905"/>
<dbReference type="KEGG" id="bas:BUsg_433"/>
<dbReference type="eggNOG" id="COG0136">
    <property type="taxonomic scope" value="Bacteria"/>
</dbReference>
<dbReference type="HOGENOM" id="CLU_066397_0_0_6"/>
<dbReference type="UniPathway" id="UPA00034">
    <property type="reaction ID" value="UER00016"/>
</dbReference>
<dbReference type="UniPathway" id="UPA00050">
    <property type="reaction ID" value="UER00463"/>
</dbReference>
<dbReference type="UniPathway" id="UPA00051">
    <property type="reaction ID" value="UER00464"/>
</dbReference>
<dbReference type="Proteomes" id="UP000000416">
    <property type="component" value="Chromosome"/>
</dbReference>
<dbReference type="GO" id="GO:0004073">
    <property type="term" value="F:aspartate-semialdehyde dehydrogenase activity"/>
    <property type="evidence" value="ECO:0007669"/>
    <property type="project" value="UniProtKB-UniRule"/>
</dbReference>
<dbReference type="GO" id="GO:0051287">
    <property type="term" value="F:NAD binding"/>
    <property type="evidence" value="ECO:0007669"/>
    <property type="project" value="InterPro"/>
</dbReference>
<dbReference type="GO" id="GO:0050661">
    <property type="term" value="F:NADP binding"/>
    <property type="evidence" value="ECO:0007669"/>
    <property type="project" value="UniProtKB-UniRule"/>
</dbReference>
<dbReference type="GO" id="GO:0046983">
    <property type="term" value="F:protein dimerization activity"/>
    <property type="evidence" value="ECO:0007669"/>
    <property type="project" value="InterPro"/>
</dbReference>
<dbReference type="GO" id="GO:0071266">
    <property type="term" value="P:'de novo' L-methionine biosynthetic process"/>
    <property type="evidence" value="ECO:0007669"/>
    <property type="project" value="UniProtKB-UniRule"/>
</dbReference>
<dbReference type="GO" id="GO:0019877">
    <property type="term" value="P:diaminopimelate biosynthetic process"/>
    <property type="evidence" value="ECO:0007669"/>
    <property type="project" value="UniProtKB-UniRule"/>
</dbReference>
<dbReference type="GO" id="GO:0009097">
    <property type="term" value="P:isoleucine biosynthetic process"/>
    <property type="evidence" value="ECO:0007669"/>
    <property type="project" value="InterPro"/>
</dbReference>
<dbReference type="GO" id="GO:0009089">
    <property type="term" value="P:lysine biosynthetic process via diaminopimelate"/>
    <property type="evidence" value="ECO:0007669"/>
    <property type="project" value="UniProtKB-UniRule"/>
</dbReference>
<dbReference type="GO" id="GO:0009088">
    <property type="term" value="P:threonine biosynthetic process"/>
    <property type="evidence" value="ECO:0007669"/>
    <property type="project" value="UniProtKB-UniRule"/>
</dbReference>
<dbReference type="CDD" id="cd23938">
    <property type="entry name" value="ASADH_C_bac_like"/>
    <property type="match status" value="1"/>
</dbReference>
<dbReference type="CDD" id="cd02314">
    <property type="entry name" value="VcASADH1_like_N"/>
    <property type="match status" value="1"/>
</dbReference>
<dbReference type="Gene3D" id="3.30.360.10">
    <property type="entry name" value="Dihydrodipicolinate Reductase, domain 2"/>
    <property type="match status" value="1"/>
</dbReference>
<dbReference type="Gene3D" id="3.40.50.720">
    <property type="entry name" value="NAD(P)-binding Rossmann-like Domain"/>
    <property type="match status" value="1"/>
</dbReference>
<dbReference type="HAMAP" id="MF_02121">
    <property type="entry name" value="ASADH"/>
    <property type="match status" value="1"/>
</dbReference>
<dbReference type="InterPro" id="IPR000319">
    <property type="entry name" value="Asp-semialdehyde_DH_CS"/>
</dbReference>
<dbReference type="InterPro" id="IPR011534">
    <property type="entry name" value="Asp_ADH_gamma-type"/>
</dbReference>
<dbReference type="InterPro" id="IPR012080">
    <property type="entry name" value="Asp_semialdehyde_DH"/>
</dbReference>
<dbReference type="InterPro" id="IPR036291">
    <property type="entry name" value="NAD(P)-bd_dom_sf"/>
</dbReference>
<dbReference type="InterPro" id="IPR000534">
    <property type="entry name" value="Semialdehyde_DH_NAD-bd"/>
</dbReference>
<dbReference type="InterPro" id="IPR012280">
    <property type="entry name" value="Semialdhyde_DH_dimer_dom"/>
</dbReference>
<dbReference type="NCBIfam" id="TIGR01745">
    <property type="entry name" value="asd_gamma"/>
    <property type="match status" value="1"/>
</dbReference>
<dbReference type="NCBIfam" id="NF005144">
    <property type="entry name" value="PRK06598.1"/>
    <property type="match status" value="1"/>
</dbReference>
<dbReference type="PANTHER" id="PTHR46278:SF4">
    <property type="entry name" value="ASPARTATE-SEMIALDEHYDE DEHYDROGENASE"/>
    <property type="match status" value="1"/>
</dbReference>
<dbReference type="PANTHER" id="PTHR46278">
    <property type="entry name" value="DEHYDROGENASE, PUTATIVE-RELATED"/>
    <property type="match status" value="1"/>
</dbReference>
<dbReference type="Pfam" id="PF01118">
    <property type="entry name" value="Semialdhyde_dh"/>
    <property type="match status" value="1"/>
</dbReference>
<dbReference type="Pfam" id="PF02774">
    <property type="entry name" value="Semialdhyde_dhC"/>
    <property type="match status" value="1"/>
</dbReference>
<dbReference type="PIRSF" id="PIRSF000148">
    <property type="entry name" value="ASA_dh"/>
    <property type="match status" value="1"/>
</dbReference>
<dbReference type="SMART" id="SM00859">
    <property type="entry name" value="Semialdhyde_dh"/>
    <property type="match status" value="1"/>
</dbReference>
<dbReference type="SUPFAM" id="SSF55347">
    <property type="entry name" value="Glyceraldehyde-3-phosphate dehydrogenase-like, C-terminal domain"/>
    <property type="match status" value="1"/>
</dbReference>
<dbReference type="SUPFAM" id="SSF51735">
    <property type="entry name" value="NAD(P)-binding Rossmann-fold domains"/>
    <property type="match status" value="1"/>
</dbReference>
<dbReference type="PROSITE" id="PS01103">
    <property type="entry name" value="ASD"/>
    <property type="match status" value="1"/>
</dbReference>
<keyword id="KW-0028">Amino-acid biosynthesis</keyword>
<keyword id="KW-0220">Diaminopimelate biosynthesis</keyword>
<keyword id="KW-0457">Lysine biosynthesis</keyword>
<keyword id="KW-0486">Methionine biosynthesis</keyword>
<keyword id="KW-0521">NADP</keyword>
<keyword id="KW-0560">Oxidoreductase</keyword>
<keyword id="KW-0791">Threonine biosynthesis</keyword>
<comment type="function">
    <text evidence="1">Catalyzes the NADPH-dependent formation of L-aspartate-semialdehyde (L-ASA) by the reductive dephosphorylation of L-aspartyl-4-phosphate.</text>
</comment>
<comment type="catalytic activity">
    <reaction evidence="1">
        <text>L-aspartate 4-semialdehyde + phosphate + NADP(+) = 4-phospho-L-aspartate + NADPH + H(+)</text>
        <dbReference type="Rhea" id="RHEA:24284"/>
        <dbReference type="ChEBI" id="CHEBI:15378"/>
        <dbReference type="ChEBI" id="CHEBI:43474"/>
        <dbReference type="ChEBI" id="CHEBI:57535"/>
        <dbReference type="ChEBI" id="CHEBI:57783"/>
        <dbReference type="ChEBI" id="CHEBI:58349"/>
        <dbReference type="ChEBI" id="CHEBI:537519"/>
        <dbReference type="EC" id="1.2.1.11"/>
    </reaction>
</comment>
<comment type="pathway">
    <text evidence="1">Amino-acid biosynthesis; L-lysine biosynthesis via DAP pathway; (S)-tetrahydrodipicolinate from L-aspartate: step 2/4.</text>
</comment>
<comment type="pathway">
    <text evidence="1">Amino-acid biosynthesis; L-methionine biosynthesis via de novo pathway; L-homoserine from L-aspartate: step 2/3.</text>
</comment>
<comment type="pathway">
    <text evidence="1">Amino-acid biosynthesis; L-threonine biosynthesis; L-threonine from L-aspartate: step 2/5.</text>
</comment>
<comment type="subunit">
    <text evidence="1">Homodimer.</text>
</comment>
<comment type="similarity">
    <text evidence="1">Belongs to the aspartate-semialdehyde dehydrogenase family.</text>
</comment>
<accession>Q8K9B5</accession>
<gene>
    <name evidence="1" type="primary">asd</name>
    <name type="ordered locus">BUsg_433</name>
</gene>
<protein>
    <recommendedName>
        <fullName evidence="1">Aspartate-semialdehyde dehydrogenase</fullName>
        <shortName evidence="1">ASA dehydrogenase</shortName>
        <shortName evidence="1">ASADH</shortName>
        <ecNumber evidence="1">1.2.1.11</ecNumber>
    </recommendedName>
    <alternativeName>
        <fullName evidence="1">Aspartate-beta-semialdehyde dehydrogenase</fullName>
    </alternativeName>
</protein>
<organism>
    <name type="scientific">Buchnera aphidicola subsp. Schizaphis graminum (strain Sg)</name>
    <dbReference type="NCBI Taxonomy" id="198804"/>
    <lineage>
        <taxon>Bacteria</taxon>
        <taxon>Pseudomonadati</taxon>
        <taxon>Pseudomonadota</taxon>
        <taxon>Gammaproteobacteria</taxon>
        <taxon>Enterobacterales</taxon>
        <taxon>Erwiniaceae</taxon>
        <taxon>Buchnera</taxon>
    </lineage>
</organism>
<name>DHAS_BUCAP</name>
<proteinExistence type="inferred from homology"/>